<dbReference type="EC" id="5.4.3.8" evidence="1"/>
<dbReference type="EMBL" id="CP001348">
    <property type="protein sequence ID" value="ACL75636.1"/>
    <property type="molecule type" value="Genomic_DNA"/>
</dbReference>
<dbReference type="RefSeq" id="WP_015924785.1">
    <property type="nucleotide sequence ID" value="NC_011898.1"/>
</dbReference>
<dbReference type="SMR" id="B8I0R1"/>
<dbReference type="STRING" id="394503.Ccel_1280"/>
<dbReference type="KEGG" id="cce:Ccel_1280"/>
<dbReference type="eggNOG" id="COG0001">
    <property type="taxonomic scope" value="Bacteria"/>
</dbReference>
<dbReference type="HOGENOM" id="CLU_016922_1_5_9"/>
<dbReference type="OrthoDB" id="9807885at2"/>
<dbReference type="UniPathway" id="UPA00251">
    <property type="reaction ID" value="UER00317"/>
</dbReference>
<dbReference type="Proteomes" id="UP000001349">
    <property type="component" value="Chromosome"/>
</dbReference>
<dbReference type="GO" id="GO:0005737">
    <property type="term" value="C:cytoplasm"/>
    <property type="evidence" value="ECO:0007669"/>
    <property type="project" value="UniProtKB-SubCell"/>
</dbReference>
<dbReference type="GO" id="GO:0042286">
    <property type="term" value="F:glutamate-1-semialdehyde 2,1-aminomutase activity"/>
    <property type="evidence" value="ECO:0007669"/>
    <property type="project" value="UniProtKB-UniRule"/>
</dbReference>
<dbReference type="GO" id="GO:0030170">
    <property type="term" value="F:pyridoxal phosphate binding"/>
    <property type="evidence" value="ECO:0007669"/>
    <property type="project" value="InterPro"/>
</dbReference>
<dbReference type="GO" id="GO:0008483">
    <property type="term" value="F:transaminase activity"/>
    <property type="evidence" value="ECO:0007669"/>
    <property type="project" value="InterPro"/>
</dbReference>
<dbReference type="GO" id="GO:0006782">
    <property type="term" value="P:protoporphyrinogen IX biosynthetic process"/>
    <property type="evidence" value="ECO:0007669"/>
    <property type="project" value="UniProtKB-UniRule"/>
</dbReference>
<dbReference type="CDD" id="cd00610">
    <property type="entry name" value="OAT_like"/>
    <property type="match status" value="1"/>
</dbReference>
<dbReference type="FunFam" id="3.40.640.10:FF:000021">
    <property type="entry name" value="Glutamate-1-semialdehyde 2,1-aminomutase"/>
    <property type="match status" value="1"/>
</dbReference>
<dbReference type="Gene3D" id="3.90.1150.10">
    <property type="entry name" value="Aspartate Aminotransferase, domain 1"/>
    <property type="match status" value="1"/>
</dbReference>
<dbReference type="Gene3D" id="3.40.640.10">
    <property type="entry name" value="Type I PLP-dependent aspartate aminotransferase-like (Major domain)"/>
    <property type="match status" value="1"/>
</dbReference>
<dbReference type="HAMAP" id="MF_00375">
    <property type="entry name" value="HemL_aminotrans_3"/>
    <property type="match status" value="1"/>
</dbReference>
<dbReference type="InterPro" id="IPR004639">
    <property type="entry name" value="4pyrrol_synth_GluAld_NH2Trfase"/>
</dbReference>
<dbReference type="InterPro" id="IPR005814">
    <property type="entry name" value="Aminotrans_3"/>
</dbReference>
<dbReference type="InterPro" id="IPR049704">
    <property type="entry name" value="Aminotrans_3_PPA_site"/>
</dbReference>
<dbReference type="InterPro" id="IPR015424">
    <property type="entry name" value="PyrdxlP-dep_Trfase"/>
</dbReference>
<dbReference type="InterPro" id="IPR015421">
    <property type="entry name" value="PyrdxlP-dep_Trfase_major"/>
</dbReference>
<dbReference type="InterPro" id="IPR015422">
    <property type="entry name" value="PyrdxlP-dep_Trfase_small"/>
</dbReference>
<dbReference type="NCBIfam" id="TIGR00713">
    <property type="entry name" value="hemL"/>
    <property type="match status" value="1"/>
</dbReference>
<dbReference type="NCBIfam" id="NF000818">
    <property type="entry name" value="PRK00062.1"/>
    <property type="match status" value="1"/>
</dbReference>
<dbReference type="PANTHER" id="PTHR43713">
    <property type="entry name" value="GLUTAMATE-1-SEMIALDEHYDE 2,1-AMINOMUTASE"/>
    <property type="match status" value="1"/>
</dbReference>
<dbReference type="PANTHER" id="PTHR43713:SF3">
    <property type="entry name" value="GLUTAMATE-1-SEMIALDEHYDE 2,1-AMINOMUTASE 1, CHLOROPLASTIC-RELATED"/>
    <property type="match status" value="1"/>
</dbReference>
<dbReference type="Pfam" id="PF00202">
    <property type="entry name" value="Aminotran_3"/>
    <property type="match status" value="1"/>
</dbReference>
<dbReference type="SUPFAM" id="SSF53383">
    <property type="entry name" value="PLP-dependent transferases"/>
    <property type="match status" value="1"/>
</dbReference>
<dbReference type="PROSITE" id="PS00600">
    <property type="entry name" value="AA_TRANSFER_CLASS_3"/>
    <property type="match status" value="1"/>
</dbReference>
<organism>
    <name type="scientific">Ruminiclostridium cellulolyticum (strain ATCC 35319 / DSM 5812 / JCM 6584 / H10)</name>
    <name type="common">Clostridium cellulolyticum</name>
    <dbReference type="NCBI Taxonomy" id="394503"/>
    <lineage>
        <taxon>Bacteria</taxon>
        <taxon>Bacillati</taxon>
        <taxon>Bacillota</taxon>
        <taxon>Clostridia</taxon>
        <taxon>Eubacteriales</taxon>
        <taxon>Oscillospiraceae</taxon>
        <taxon>Ruminiclostridium</taxon>
    </lineage>
</organism>
<proteinExistence type="inferred from homology"/>
<sequence length="434" mass="46930">MISSNGLFDRAKKVIPGGVNSPVRAFRAVDLNPLFISRAKGSKLYDVEEREYIDYVCSWGPMILGHSNDLILKNVENVLHNGLSFGAPVETEVQIAEMIVSMVPGVEMVRMVNSGTEAVMSAIRLARGFTKRDKIIKFEGCYHGHSDSMLVKAGSGVLTAGIPDSLGVPQNAAGDTLTAVYNNISSVEQLFQENKNHIAAVIIEPVAANMGVIPPQEGFLKELSGICRQNSALLIFDEVITGFRLAAGGAQEYFGVEADIVTFGKIIGGGMPVGAYAGRKEIMEHVAPCGGVYQAGTLSGNPVAMAAGLAQLEILKSKPEIYEDINKKAEFLGNGFEKIVQKYKAPITLNRVGSLLCGFFSQNPVTNYQEAKLSNTNYYAAYFKSMLNKGIYLAPSQFEAMFVSSAHTYEDIDATLKAAEETLVENISLMEELI</sequence>
<protein>
    <recommendedName>
        <fullName evidence="1">Glutamate-1-semialdehyde 2,1-aminomutase</fullName>
        <shortName evidence="1">GSA</shortName>
        <ecNumber evidence="1">5.4.3.8</ecNumber>
    </recommendedName>
    <alternativeName>
        <fullName evidence="1">Glutamate-1-semialdehyde aminotransferase</fullName>
        <shortName evidence="1">GSA-AT</shortName>
    </alternativeName>
</protein>
<name>GSA_RUMCH</name>
<reference key="1">
    <citation type="submission" date="2009-01" db="EMBL/GenBank/DDBJ databases">
        <title>Complete sequence of Clostridium cellulolyticum H10.</title>
        <authorList>
            <consortium name="US DOE Joint Genome Institute"/>
            <person name="Lucas S."/>
            <person name="Copeland A."/>
            <person name="Lapidus A."/>
            <person name="Glavina del Rio T."/>
            <person name="Dalin E."/>
            <person name="Tice H."/>
            <person name="Bruce D."/>
            <person name="Goodwin L."/>
            <person name="Pitluck S."/>
            <person name="Chertkov O."/>
            <person name="Saunders E."/>
            <person name="Brettin T."/>
            <person name="Detter J.C."/>
            <person name="Han C."/>
            <person name="Larimer F."/>
            <person name="Land M."/>
            <person name="Hauser L."/>
            <person name="Kyrpides N."/>
            <person name="Ivanova N."/>
            <person name="Zhou J."/>
            <person name="Richardson P."/>
        </authorList>
    </citation>
    <scope>NUCLEOTIDE SEQUENCE [LARGE SCALE GENOMIC DNA]</scope>
    <source>
        <strain>ATCC 35319 / DSM 5812 / JCM 6584 / H10</strain>
    </source>
</reference>
<feature type="chain" id="PRO_0000382295" description="Glutamate-1-semialdehyde 2,1-aminomutase">
    <location>
        <begin position="1"/>
        <end position="434"/>
    </location>
</feature>
<feature type="modified residue" description="N6-(pyridoxal phosphate)lysine" evidence="1">
    <location>
        <position position="265"/>
    </location>
</feature>
<gene>
    <name evidence="1" type="primary">hemL</name>
    <name type="ordered locus">Ccel_1280</name>
</gene>
<accession>B8I0R1</accession>
<keyword id="KW-0963">Cytoplasm</keyword>
<keyword id="KW-0413">Isomerase</keyword>
<keyword id="KW-0627">Porphyrin biosynthesis</keyword>
<keyword id="KW-0663">Pyridoxal phosphate</keyword>
<keyword id="KW-1185">Reference proteome</keyword>
<comment type="catalytic activity">
    <reaction evidence="1">
        <text>(S)-4-amino-5-oxopentanoate = 5-aminolevulinate</text>
        <dbReference type="Rhea" id="RHEA:14265"/>
        <dbReference type="ChEBI" id="CHEBI:57501"/>
        <dbReference type="ChEBI" id="CHEBI:356416"/>
        <dbReference type="EC" id="5.4.3.8"/>
    </reaction>
</comment>
<comment type="cofactor">
    <cofactor evidence="1">
        <name>pyridoxal 5'-phosphate</name>
        <dbReference type="ChEBI" id="CHEBI:597326"/>
    </cofactor>
</comment>
<comment type="pathway">
    <text evidence="1">Porphyrin-containing compound metabolism; protoporphyrin-IX biosynthesis; 5-aminolevulinate from L-glutamyl-tRNA(Glu): step 2/2.</text>
</comment>
<comment type="subunit">
    <text evidence="1">Homodimer.</text>
</comment>
<comment type="subcellular location">
    <subcellularLocation>
        <location evidence="1">Cytoplasm</location>
    </subcellularLocation>
</comment>
<comment type="similarity">
    <text evidence="1">Belongs to the class-III pyridoxal-phosphate-dependent aminotransferase family. HemL subfamily.</text>
</comment>
<evidence type="ECO:0000255" key="1">
    <source>
        <dbReference type="HAMAP-Rule" id="MF_00375"/>
    </source>
</evidence>